<proteinExistence type="evidence at protein level"/>
<reference key="1">
    <citation type="journal article" date="1996" name="Genomics">
        <title>Complete sequencing of the murine USF gene and comparison of its genomic organization to that of mFIP/USF2.</title>
        <authorList>
            <person name="Aperlo C."/>
            <person name="Boulukos K.E."/>
            <person name="Sage J."/>
            <person name="Cuzin F."/>
            <person name="Pognonec P."/>
        </authorList>
    </citation>
    <scope>NUCLEOTIDE SEQUENCE [GENOMIC DNA]</scope>
    <source>
        <strain>C57BL/6J</strain>
    </source>
</reference>
<evidence type="ECO:0000250" key="1">
    <source>
        <dbReference type="UniProtKB" id="P22415"/>
    </source>
</evidence>
<evidence type="ECO:0000255" key="2">
    <source>
        <dbReference type="PROSITE-ProRule" id="PRU00981"/>
    </source>
</evidence>
<evidence type="ECO:0000256" key="3">
    <source>
        <dbReference type="SAM" id="MobiDB-lite"/>
    </source>
</evidence>
<organism>
    <name type="scientific">Mus musculus</name>
    <name type="common">Mouse</name>
    <dbReference type="NCBI Taxonomy" id="10090"/>
    <lineage>
        <taxon>Eukaryota</taxon>
        <taxon>Metazoa</taxon>
        <taxon>Chordata</taxon>
        <taxon>Craniata</taxon>
        <taxon>Vertebrata</taxon>
        <taxon>Euteleostomi</taxon>
        <taxon>Mammalia</taxon>
        <taxon>Eutheria</taxon>
        <taxon>Euarchontoglires</taxon>
        <taxon>Glires</taxon>
        <taxon>Rodentia</taxon>
        <taxon>Myomorpha</taxon>
        <taxon>Muroidea</taxon>
        <taxon>Muridae</taxon>
        <taxon>Murinae</taxon>
        <taxon>Mus</taxon>
        <taxon>Mus</taxon>
    </lineage>
</organism>
<protein>
    <recommendedName>
        <fullName>Upstream stimulatory factor 1</fullName>
    </recommendedName>
    <alternativeName>
        <fullName>Major late transcription factor 1</fullName>
    </alternativeName>
</protein>
<keyword id="KW-0238">DNA-binding</keyword>
<keyword id="KW-1017">Isopeptide bond</keyword>
<keyword id="KW-0539">Nucleus</keyword>
<keyword id="KW-1185">Reference proteome</keyword>
<keyword id="KW-0804">Transcription</keyword>
<keyword id="KW-0805">Transcription regulation</keyword>
<keyword id="KW-0832">Ubl conjugation</keyword>
<sequence length="310" mass="33570">MKGQQKTAETEEGTVQIQEGAVATGEDPTSVAIASIQSAATFPDPNVKYVFRTENGGQVMYRVIQVSEGQLDGQTEGSGAISGYPATQSMTQAVIQGAFTSDDAVDTEGAAAETHYTYFPSTAVGDGSGGTTSGSTTAVVTTQGSEALLGQATPPSTGQFFVMMSPQEVLQGGSQRSIAPRTHPYSPKSEAPRTTRDEKRRAQHNEVERRRRDKINNWIVQLSKIIPDCSMESTKSGQSKGGILSKACDYIQELRQSNHRLSEELQGLDQLQLDNDVLRQQVEDLKNKNLLLRAQLRHHGLEVVIKNDSN</sequence>
<gene>
    <name type="primary">Usf1</name>
    <name type="synonym">Usf</name>
</gene>
<comment type="function">
    <text>Transcription factor that binds to a symmetrical DNA sequence (E-boxes) (5'-CACGTG-3') that is found in a variety of viral and cellular promoters.</text>
</comment>
<comment type="subunit">
    <text>Efficient DNA binding requires dimerization with another bHLH protein. Binds DNA as a homodimer or a heterodimer (USF1/USF2).</text>
</comment>
<comment type="interaction">
    <interactant intactId="EBI-2325635">
        <id>Q61069</id>
    </interactant>
    <interactant intactId="EBI-647118">
        <id>P42225</id>
        <label>Stat1</label>
    </interactant>
    <organismsDiffer>false</organismsDiffer>
    <experiments>2</experiments>
</comment>
<comment type="subcellular location">
    <subcellularLocation>
        <location>Nucleus</location>
    </subcellularLocation>
</comment>
<accession>Q61069</accession>
<feature type="chain" id="PRO_0000127497" description="Upstream stimulatory factor 1">
    <location>
        <begin position="1"/>
        <end position="310"/>
    </location>
</feature>
<feature type="domain" description="bHLH" evidence="2">
    <location>
        <begin position="199"/>
        <end position="254"/>
    </location>
</feature>
<feature type="region of interest" description="Disordered" evidence="3">
    <location>
        <begin position="1"/>
        <end position="26"/>
    </location>
</feature>
<feature type="region of interest" description="Disordered" evidence="3">
    <location>
        <begin position="171"/>
        <end position="209"/>
    </location>
</feature>
<feature type="region of interest" description="Leucine-zipper">
    <location>
        <begin position="271"/>
        <end position="292"/>
    </location>
</feature>
<feature type="compositionally biased region" description="Polar residues" evidence="3">
    <location>
        <begin position="1"/>
        <end position="17"/>
    </location>
</feature>
<feature type="compositionally biased region" description="Basic and acidic residues" evidence="3">
    <location>
        <begin position="190"/>
        <end position="209"/>
    </location>
</feature>
<feature type="cross-link" description="Glycyl lysine isopeptide (Lys-Gly) (interchain with G-Cter in SUMO2)" evidence="1">
    <location>
        <position position="306"/>
    </location>
</feature>
<name>USF1_MOUSE</name>
<dbReference type="EMBL" id="U41741">
    <property type="protein sequence ID" value="AAC52921.1"/>
    <property type="molecule type" value="Genomic_DNA"/>
</dbReference>
<dbReference type="CCDS" id="CCDS15495.1"/>
<dbReference type="RefSeq" id="NP_001292605.1">
    <property type="nucleotide sequence ID" value="NM_001305676.2"/>
</dbReference>
<dbReference type="RefSeq" id="NP_001292606.1">
    <property type="nucleotide sequence ID" value="NM_001305677.2"/>
</dbReference>
<dbReference type="RefSeq" id="NP_001408518.1">
    <property type="nucleotide sequence ID" value="NM_001421589.1"/>
</dbReference>
<dbReference type="RefSeq" id="NP_001408519.1">
    <property type="nucleotide sequence ID" value="NM_001421590.1"/>
</dbReference>
<dbReference type="RefSeq" id="NP_033506.1">
    <property type="nucleotide sequence ID" value="NM_009480.4"/>
</dbReference>
<dbReference type="RefSeq" id="XP_030108912.1">
    <property type="nucleotide sequence ID" value="XM_030253052.2"/>
</dbReference>
<dbReference type="SMR" id="Q61069"/>
<dbReference type="BioGRID" id="204464">
    <property type="interactions" value="5"/>
</dbReference>
<dbReference type="ComplexPortal" id="CPX-3085">
    <property type="entry name" value="USF1 upstream stimulatory factor complex"/>
</dbReference>
<dbReference type="ComplexPortal" id="CPX-3086">
    <property type="entry name" value="USF1-USF2 upstream stimulatory factor complex"/>
</dbReference>
<dbReference type="FunCoup" id="Q61069">
    <property type="interactions" value="2283"/>
</dbReference>
<dbReference type="IntAct" id="Q61069">
    <property type="interactions" value="1"/>
</dbReference>
<dbReference type="STRING" id="10090.ENSMUSP00000125729"/>
<dbReference type="iPTMnet" id="Q61069"/>
<dbReference type="PhosphoSitePlus" id="Q61069"/>
<dbReference type="jPOST" id="Q61069"/>
<dbReference type="PaxDb" id="10090-ENSMUSP00000125729"/>
<dbReference type="ProteomicsDB" id="297901"/>
<dbReference type="Pumba" id="Q61069"/>
<dbReference type="Antibodypedia" id="3773">
    <property type="antibodies" value="372 antibodies from 36 providers"/>
</dbReference>
<dbReference type="DNASU" id="22278"/>
<dbReference type="Ensembl" id="ENSMUST00000161241.8">
    <property type="protein sequence ID" value="ENSMUSP00000125729.2"/>
    <property type="gene ID" value="ENSMUSG00000026641.14"/>
</dbReference>
<dbReference type="Ensembl" id="ENSMUST00000167546.2">
    <property type="protein sequence ID" value="ENSMUSP00000128913.2"/>
    <property type="gene ID" value="ENSMUSG00000026641.14"/>
</dbReference>
<dbReference type="GeneID" id="22278"/>
<dbReference type="KEGG" id="mmu:22278"/>
<dbReference type="UCSC" id="uc007doj.2">
    <property type="organism name" value="mouse"/>
</dbReference>
<dbReference type="AGR" id="MGI:99542"/>
<dbReference type="CTD" id="7391"/>
<dbReference type="MGI" id="MGI:99542">
    <property type="gene designation" value="Usf1"/>
</dbReference>
<dbReference type="VEuPathDB" id="HostDB:ENSMUSG00000026641"/>
<dbReference type="eggNOG" id="KOG1318">
    <property type="taxonomic scope" value="Eukaryota"/>
</dbReference>
<dbReference type="GeneTree" id="ENSGT00940000157083"/>
<dbReference type="HOGENOM" id="CLU_070485_0_0_1"/>
<dbReference type="InParanoid" id="Q61069"/>
<dbReference type="OMA" id="GAQVMYR"/>
<dbReference type="OrthoDB" id="690068at2759"/>
<dbReference type="PhylomeDB" id="Q61069"/>
<dbReference type="TreeFam" id="TF323338"/>
<dbReference type="Reactome" id="R-MMU-9018519">
    <property type="pathway name" value="Estrogen-dependent gene expression"/>
</dbReference>
<dbReference type="Reactome" id="R-MMU-9824585">
    <property type="pathway name" value="Regulation of MITF-M-dependent genes involved in pigmentation"/>
</dbReference>
<dbReference type="BioGRID-ORCS" id="22278">
    <property type="hits" value="1 hit in 64 CRISPR screens"/>
</dbReference>
<dbReference type="ChiTaRS" id="Usf1">
    <property type="organism name" value="mouse"/>
</dbReference>
<dbReference type="PRO" id="PR:Q61069"/>
<dbReference type="Proteomes" id="UP000000589">
    <property type="component" value="Chromosome 1"/>
</dbReference>
<dbReference type="RNAct" id="Q61069">
    <property type="molecule type" value="protein"/>
</dbReference>
<dbReference type="Bgee" id="ENSMUSG00000026641">
    <property type="expression patterns" value="Expressed in cortical plate and 150 other cell types or tissues"/>
</dbReference>
<dbReference type="ExpressionAtlas" id="Q61069">
    <property type="expression patterns" value="baseline and differential"/>
</dbReference>
<dbReference type="GO" id="GO:0000785">
    <property type="term" value="C:chromatin"/>
    <property type="evidence" value="ECO:0007669"/>
    <property type="project" value="Ensembl"/>
</dbReference>
<dbReference type="GO" id="GO:0005794">
    <property type="term" value="C:Golgi apparatus"/>
    <property type="evidence" value="ECO:0007669"/>
    <property type="project" value="Ensembl"/>
</dbReference>
<dbReference type="GO" id="GO:0005654">
    <property type="term" value="C:nucleoplasm"/>
    <property type="evidence" value="ECO:0007669"/>
    <property type="project" value="Ensembl"/>
</dbReference>
<dbReference type="GO" id="GO:0005667">
    <property type="term" value="C:transcription regulator complex"/>
    <property type="evidence" value="ECO:0000305"/>
    <property type="project" value="MGI"/>
</dbReference>
<dbReference type="GO" id="GO:0043425">
    <property type="term" value="F:bHLH transcription factor binding"/>
    <property type="evidence" value="ECO:0007669"/>
    <property type="project" value="Ensembl"/>
</dbReference>
<dbReference type="GO" id="GO:0003677">
    <property type="term" value="F:DNA binding"/>
    <property type="evidence" value="ECO:0000314"/>
    <property type="project" value="MGI"/>
</dbReference>
<dbReference type="GO" id="GO:0001228">
    <property type="term" value="F:DNA-binding transcription activator activity, RNA polymerase II-specific"/>
    <property type="evidence" value="ECO:0000315"/>
    <property type="project" value="BHF-UCL"/>
</dbReference>
<dbReference type="GO" id="GO:0003700">
    <property type="term" value="F:DNA-binding transcription factor activity"/>
    <property type="evidence" value="ECO:0000314"/>
    <property type="project" value="MGI"/>
</dbReference>
<dbReference type="GO" id="GO:0042826">
    <property type="term" value="F:histone deacetylase binding"/>
    <property type="evidence" value="ECO:0007669"/>
    <property type="project" value="Ensembl"/>
</dbReference>
<dbReference type="GO" id="GO:0046982">
    <property type="term" value="F:protein heterodimerization activity"/>
    <property type="evidence" value="ECO:0007669"/>
    <property type="project" value="Ensembl"/>
</dbReference>
<dbReference type="GO" id="GO:0042803">
    <property type="term" value="F:protein homodimerization activity"/>
    <property type="evidence" value="ECO:0007669"/>
    <property type="project" value="Ensembl"/>
</dbReference>
<dbReference type="GO" id="GO:0019901">
    <property type="term" value="F:protein kinase binding"/>
    <property type="evidence" value="ECO:0007669"/>
    <property type="project" value="Ensembl"/>
</dbReference>
<dbReference type="GO" id="GO:0044877">
    <property type="term" value="F:protein-containing complex binding"/>
    <property type="evidence" value="ECO:0007669"/>
    <property type="project" value="Ensembl"/>
</dbReference>
<dbReference type="GO" id="GO:1990837">
    <property type="term" value="F:sequence-specific double-stranded DNA binding"/>
    <property type="evidence" value="ECO:0007669"/>
    <property type="project" value="Ensembl"/>
</dbReference>
<dbReference type="GO" id="GO:0071333">
    <property type="term" value="P:cellular response to glucose stimulus"/>
    <property type="evidence" value="ECO:0000315"/>
    <property type="project" value="BHF-UCL"/>
</dbReference>
<dbReference type="GO" id="GO:0032869">
    <property type="term" value="P:cellular response to insulin stimulus"/>
    <property type="evidence" value="ECO:0007669"/>
    <property type="project" value="Ensembl"/>
</dbReference>
<dbReference type="GO" id="GO:0010255">
    <property type="term" value="P:glucose mediated signaling pathway"/>
    <property type="evidence" value="ECO:0000315"/>
    <property type="project" value="BHF-UCL"/>
</dbReference>
<dbReference type="GO" id="GO:0006006">
    <property type="term" value="P:glucose metabolic process"/>
    <property type="evidence" value="ECO:0007669"/>
    <property type="project" value="Ensembl"/>
</dbReference>
<dbReference type="GO" id="GO:0019086">
    <property type="term" value="P:late viral transcription"/>
    <property type="evidence" value="ECO:0007669"/>
    <property type="project" value="Ensembl"/>
</dbReference>
<dbReference type="GO" id="GO:0055088">
    <property type="term" value="P:lipid homeostasis"/>
    <property type="evidence" value="ECO:0000315"/>
    <property type="project" value="BHF-UCL"/>
</dbReference>
<dbReference type="GO" id="GO:0045893">
    <property type="term" value="P:positive regulation of DNA-templated transcription"/>
    <property type="evidence" value="ECO:0000314"/>
    <property type="project" value="MGI"/>
</dbReference>
<dbReference type="GO" id="GO:0045944">
    <property type="term" value="P:positive regulation of transcription by RNA polymerase II"/>
    <property type="evidence" value="ECO:0000315"/>
    <property type="project" value="BHF-UCL"/>
</dbReference>
<dbReference type="GO" id="GO:0000432">
    <property type="term" value="P:positive regulation of transcription from RNA polymerase II promoter by glucose"/>
    <property type="evidence" value="ECO:0000315"/>
    <property type="project" value="BHF-UCL"/>
</dbReference>
<dbReference type="GO" id="GO:0001666">
    <property type="term" value="P:response to hypoxia"/>
    <property type="evidence" value="ECO:0007669"/>
    <property type="project" value="Ensembl"/>
</dbReference>
<dbReference type="GO" id="GO:0009411">
    <property type="term" value="P:response to UV"/>
    <property type="evidence" value="ECO:0000315"/>
    <property type="project" value="BHF-UCL"/>
</dbReference>
<dbReference type="CDD" id="cd18924">
    <property type="entry name" value="bHLHzip_USF1"/>
    <property type="match status" value="1"/>
</dbReference>
<dbReference type="FunFam" id="4.10.280.10:FF:000067">
    <property type="entry name" value="upstream stimulatory factor 1 isoform X1"/>
    <property type="match status" value="1"/>
</dbReference>
<dbReference type="Gene3D" id="4.10.280.10">
    <property type="entry name" value="Helix-loop-helix DNA-binding domain"/>
    <property type="match status" value="1"/>
</dbReference>
<dbReference type="InterPro" id="IPR011598">
    <property type="entry name" value="bHLH_dom"/>
</dbReference>
<dbReference type="InterPro" id="IPR036638">
    <property type="entry name" value="HLH_DNA-bd_sf"/>
</dbReference>
<dbReference type="InterPro" id="IPR051732">
    <property type="entry name" value="USF"/>
</dbReference>
<dbReference type="PANTHER" id="PTHR46117">
    <property type="entry name" value="FI24210P1"/>
    <property type="match status" value="1"/>
</dbReference>
<dbReference type="PANTHER" id="PTHR46117:SF1">
    <property type="entry name" value="UPSTREAM STIMULATORY FACTOR 1"/>
    <property type="match status" value="1"/>
</dbReference>
<dbReference type="Pfam" id="PF00010">
    <property type="entry name" value="HLH"/>
    <property type="match status" value="1"/>
</dbReference>
<dbReference type="SMART" id="SM00353">
    <property type="entry name" value="HLH"/>
    <property type="match status" value="1"/>
</dbReference>
<dbReference type="SUPFAM" id="SSF47459">
    <property type="entry name" value="HLH, helix-loop-helix DNA-binding domain"/>
    <property type="match status" value="1"/>
</dbReference>
<dbReference type="PROSITE" id="PS50888">
    <property type="entry name" value="BHLH"/>
    <property type="match status" value="1"/>
</dbReference>